<protein>
    <recommendedName>
        <fullName>Doublesex and mab-3 related transcription factor 3</fullName>
    </recommendedName>
</protein>
<proteinExistence type="inferred from homology"/>
<reference key="1">
    <citation type="journal article" date="2004" name="Nature">
        <title>Genome sequence of the Brown Norway rat yields insights into mammalian evolution.</title>
        <authorList>
            <person name="Gibbs R.A."/>
            <person name="Weinstock G.M."/>
            <person name="Metzker M.L."/>
            <person name="Muzny D.M."/>
            <person name="Sodergren E.J."/>
            <person name="Scherer S."/>
            <person name="Scott G."/>
            <person name="Steffen D."/>
            <person name="Worley K.C."/>
            <person name="Burch P.E."/>
            <person name="Okwuonu G."/>
            <person name="Hines S."/>
            <person name="Lewis L."/>
            <person name="Deramo C."/>
            <person name="Delgado O."/>
            <person name="Dugan-Rocha S."/>
            <person name="Miner G."/>
            <person name="Morgan M."/>
            <person name="Hawes A."/>
            <person name="Gill R."/>
            <person name="Holt R.A."/>
            <person name="Adams M.D."/>
            <person name="Amanatides P.G."/>
            <person name="Baden-Tillson H."/>
            <person name="Barnstead M."/>
            <person name="Chin S."/>
            <person name="Evans C.A."/>
            <person name="Ferriera S."/>
            <person name="Fosler C."/>
            <person name="Glodek A."/>
            <person name="Gu Z."/>
            <person name="Jennings D."/>
            <person name="Kraft C.L."/>
            <person name="Nguyen T."/>
            <person name="Pfannkoch C.M."/>
            <person name="Sitter C."/>
            <person name="Sutton G.G."/>
            <person name="Venter J.C."/>
            <person name="Woodage T."/>
            <person name="Smith D."/>
            <person name="Lee H.-M."/>
            <person name="Gustafson E."/>
            <person name="Cahill P."/>
            <person name="Kana A."/>
            <person name="Doucette-Stamm L."/>
            <person name="Weinstock K."/>
            <person name="Fechtel K."/>
            <person name="Weiss R.B."/>
            <person name="Dunn D.M."/>
            <person name="Green E.D."/>
            <person name="Blakesley R.W."/>
            <person name="Bouffard G.G."/>
            <person name="De Jong P.J."/>
            <person name="Osoegawa K."/>
            <person name="Zhu B."/>
            <person name="Marra M."/>
            <person name="Schein J."/>
            <person name="Bosdet I."/>
            <person name="Fjell C."/>
            <person name="Jones S."/>
            <person name="Krzywinski M."/>
            <person name="Mathewson C."/>
            <person name="Siddiqui A."/>
            <person name="Wye N."/>
            <person name="McPherson J."/>
            <person name="Zhao S."/>
            <person name="Fraser C.M."/>
            <person name="Shetty J."/>
            <person name="Shatsman S."/>
            <person name="Geer K."/>
            <person name="Chen Y."/>
            <person name="Abramzon S."/>
            <person name="Nierman W.C."/>
            <person name="Havlak P.H."/>
            <person name="Chen R."/>
            <person name="Durbin K.J."/>
            <person name="Egan A."/>
            <person name="Ren Y."/>
            <person name="Song X.-Z."/>
            <person name="Li B."/>
            <person name="Liu Y."/>
            <person name="Qin X."/>
            <person name="Cawley S."/>
            <person name="Cooney A.J."/>
            <person name="D'Souza L.M."/>
            <person name="Martin K."/>
            <person name="Wu J.Q."/>
            <person name="Gonzalez-Garay M.L."/>
            <person name="Jackson A.R."/>
            <person name="Kalafus K.J."/>
            <person name="McLeod M.P."/>
            <person name="Milosavljevic A."/>
            <person name="Virk D."/>
            <person name="Volkov A."/>
            <person name="Wheeler D.A."/>
            <person name="Zhang Z."/>
            <person name="Bailey J.A."/>
            <person name="Eichler E.E."/>
            <person name="Tuzun E."/>
            <person name="Birney E."/>
            <person name="Mongin E."/>
            <person name="Ureta-Vidal A."/>
            <person name="Woodwark C."/>
            <person name="Zdobnov E."/>
            <person name="Bork P."/>
            <person name="Suyama M."/>
            <person name="Torrents D."/>
            <person name="Alexandersson M."/>
            <person name="Trask B.J."/>
            <person name="Young J.M."/>
            <person name="Huang H."/>
            <person name="Wang H."/>
            <person name="Xing H."/>
            <person name="Daniels S."/>
            <person name="Gietzen D."/>
            <person name="Schmidt J."/>
            <person name="Stevens K."/>
            <person name="Vitt U."/>
            <person name="Wingrove J."/>
            <person name="Camara F."/>
            <person name="Mar Alba M."/>
            <person name="Abril J.F."/>
            <person name="Guigo R."/>
            <person name="Smit A."/>
            <person name="Dubchak I."/>
            <person name="Rubin E.M."/>
            <person name="Couronne O."/>
            <person name="Poliakov A."/>
            <person name="Huebner N."/>
            <person name="Ganten D."/>
            <person name="Goesele C."/>
            <person name="Hummel O."/>
            <person name="Kreitler T."/>
            <person name="Lee Y.-A."/>
            <person name="Monti J."/>
            <person name="Schulz H."/>
            <person name="Zimdahl H."/>
            <person name="Himmelbauer H."/>
            <person name="Lehrach H."/>
            <person name="Jacob H.J."/>
            <person name="Bromberg S."/>
            <person name="Gullings-Handley J."/>
            <person name="Jensen-Seaman M.I."/>
            <person name="Kwitek A.E."/>
            <person name="Lazar J."/>
            <person name="Pasko D."/>
            <person name="Tonellato P.J."/>
            <person name="Twigger S."/>
            <person name="Ponting C.P."/>
            <person name="Duarte J.M."/>
            <person name="Rice S."/>
            <person name="Goodstadt L."/>
            <person name="Beatson S.A."/>
            <person name="Emes R.D."/>
            <person name="Winter E.E."/>
            <person name="Webber C."/>
            <person name="Brandt P."/>
            <person name="Nyakatura G."/>
            <person name="Adetobi M."/>
            <person name="Chiaromonte F."/>
            <person name="Elnitski L."/>
            <person name="Eswara P."/>
            <person name="Hardison R.C."/>
            <person name="Hou M."/>
            <person name="Kolbe D."/>
            <person name="Makova K."/>
            <person name="Miller W."/>
            <person name="Nekrutenko A."/>
            <person name="Riemer C."/>
            <person name="Schwartz S."/>
            <person name="Taylor J."/>
            <person name="Yang S."/>
            <person name="Zhang Y."/>
            <person name="Lindpaintner K."/>
            <person name="Andrews T.D."/>
            <person name="Caccamo M."/>
            <person name="Clamp M."/>
            <person name="Clarke L."/>
            <person name="Curwen V."/>
            <person name="Durbin R.M."/>
            <person name="Eyras E."/>
            <person name="Searle S.M."/>
            <person name="Cooper G.M."/>
            <person name="Batzoglou S."/>
            <person name="Brudno M."/>
            <person name="Sidow A."/>
            <person name="Stone E.A."/>
            <person name="Payseur B.A."/>
            <person name="Bourque G."/>
            <person name="Lopez-Otin C."/>
            <person name="Puente X.S."/>
            <person name="Chakrabarti K."/>
            <person name="Chatterji S."/>
            <person name="Dewey C."/>
            <person name="Pachter L."/>
            <person name="Bray N."/>
            <person name="Yap V.B."/>
            <person name="Caspi A."/>
            <person name="Tesler G."/>
            <person name="Pevzner P.A."/>
            <person name="Haussler D."/>
            <person name="Roskin K.M."/>
            <person name="Baertsch R."/>
            <person name="Clawson H."/>
            <person name="Furey T.S."/>
            <person name="Hinrichs A.S."/>
            <person name="Karolchik D."/>
            <person name="Kent W.J."/>
            <person name="Rosenbloom K.R."/>
            <person name="Trumbower H."/>
            <person name="Weirauch M."/>
            <person name="Cooper D.N."/>
            <person name="Stenson P.D."/>
            <person name="Ma B."/>
            <person name="Brent M."/>
            <person name="Arumugam M."/>
            <person name="Shteynberg D."/>
            <person name="Copley R.R."/>
            <person name="Taylor M.S."/>
            <person name="Riethman H."/>
            <person name="Mudunuri U."/>
            <person name="Peterson J."/>
            <person name="Guyer M."/>
            <person name="Felsenfeld A."/>
            <person name="Old S."/>
            <person name="Mockrin S."/>
            <person name="Collins F.S."/>
        </authorList>
    </citation>
    <scope>NUCLEOTIDE SEQUENCE [LARGE SCALE GENOMIC DNA]</scope>
    <source>
        <strain>Brown Norway</strain>
    </source>
</reference>
<reference key="2">
    <citation type="submission" date="2005-07" db="EMBL/GenBank/DDBJ databases">
        <authorList>
            <person name="Mural R.J."/>
            <person name="Adams M.D."/>
            <person name="Myers E.W."/>
            <person name="Smith H.O."/>
            <person name="Venter J.C."/>
        </authorList>
    </citation>
    <scope>NUCLEOTIDE SEQUENCE [LARGE SCALE GENOMIC DNA]</scope>
    <source>
        <strain>Brown Norway</strain>
    </source>
</reference>
<name>DMRT3_RAT</name>
<accession>D4A218</accession>
<dbReference type="EMBL" id="AABR06010381">
    <property type="status" value="NOT_ANNOTATED_CDS"/>
    <property type="molecule type" value="Genomic_DNA"/>
</dbReference>
<dbReference type="EMBL" id="AABR06010382">
    <property type="status" value="NOT_ANNOTATED_CDS"/>
    <property type="molecule type" value="Genomic_DNA"/>
</dbReference>
<dbReference type="EMBL" id="CH473953">
    <property type="protein sequence ID" value="EDM13051.1"/>
    <property type="molecule type" value="Genomic_DNA"/>
</dbReference>
<dbReference type="RefSeq" id="NP_001099828.1">
    <property type="nucleotide sequence ID" value="NM_001106358.1"/>
</dbReference>
<dbReference type="RefSeq" id="XP_038964915.1">
    <property type="nucleotide sequence ID" value="XM_039108987.2"/>
</dbReference>
<dbReference type="RefSeq" id="XP_063143177.1">
    <property type="nucleotide sequence ID" value="XM_063287107.1"/>
</dbReference>
<dbReference type="SMR" id="D4A218"/>
<dbReference type="FunCoup" id="D4A218">
    <property type="interactions" value="75"/>
</dbReference>
<dbReference type="STRING" id="10116.ENSRNOP00000021792"/>
<dbReference type="iPTMnet" id="D4A218"/>
<dbReference type="PhosphoSitePlus" id="D4A218"/>
<dbReference type="PaxDb" id="10116-ENSRNOP00000021792"/>
<dbReference type="Ensembl" id="ENSRNOT00000021792.6">
    <property type="protein sequence ID" value="ENSRNOP00000021792.5"/>
    <property type="gene ID" value="ENSRNOG00000016284.6"/>
</dbReference>
<dbReference type="GeneID" id="293976"/>
<dbReference type="KEGG" id="rno:293976"/>
<dbReference type="UCSC" id="RGD:1306043">
    <property type="organism name" value="rat"/>
</dbReference>
<dbReference type="AGR" id="RGD:1306043"/>
<dbReference type="CTD" id="58524"/>
<dbReference type="RGD" id="1306043">
    <property type="gene designation" value="Dmrt3"/>
</dbReference>
<dbReference type="eggNOG" id="KOG3815">
    <property type="taxonomic scope" value="Eukaryota"/>
</dbReference>
<dbReference type="GeneTree" id="ENSGT00940000160420"/>
<dbReference type="HOGENOM" id="CLU_052449_1_0_1"/>
<dbReference type="InParanoid" id="D4A218"/>
<dbReference type="OMA" id="CPIVTKQ"/>
<dbReference type="OrthoDB" id="5842031at2759"/>
<dbReference type="PhylomeDB" id="D4A218"/>
<dbReference type="TreeFam" id="TF317837"/>
<dbReference type="PRO" id="PR:D4A218"/>
<dbReference type="Proteomes" id="UP000002494">
    <property type="component" value="Chromosome 1"/>
</dbReference>
<dbReference type="Proteomes" id="UP000234681">
    <property type="component" value="Chromosome 1"/>
</dbReference>
<dbReference type="Bgee" id="ENSRNOG00000016284">
    <property type="expression patterns" value="Expressed in testis"/>
</dbReference>
<dbReference type="GO" id="GO:0005634">
    <property type="term" value="C:nucleus"/>
    <property type="evidence" value="ECO:0000266"/>
    <property type="project" value="RGD"/>
</dbReference>
<dbReference type="GO" id="GO:0000981">
    <property type="term" value="F:DNA-binding transcription factor activity, RNA polymerase II-specific"/>
    <property type="evidence" value="ECO:0000318"/>
    <property type="project" value="GO_Central"/>
</dbReference>
<dbReference type="GO" id="GO:0046872">
    <property type="term" value="F:metal ion binding"/>
    <property type="evidence" value="ECO:0007669"/>
    <property type="project" value="UniProtKB-KW"/>
</dbReference>
<dbReference type="GO" id="GO:0000978">
    <property type="term" value="F:RNA polymerase II cis-regulatory region sequence-specific DNA binding"/>
    <property type="evidence" value="ECO:0000318"/>
    <property type="project" value="GO_Central"/>
</dbReference>
<dbReference type="GO" id="GO:0043565">
    <property type="term" value="F:sequence-specific DNA binding"/>
    <property type="evidence" value="ECO:0000266"/>
    <property type="project" value="RGD"/>
</dbReference>
<dbReference type="GO" id="GO:1990837">
    <property type="term" value="F:sequence-specific double-stranded DNA binding"/>
    <property type="evidence" value="ECO:0000266"/>
    <property type="project" value="RGD"/>
</dbReference>
<dbReference type="GO" id="GO:0007628">
    <property type="term" value="P:adult walking behavior"/>
    <property type="evidence" value="ECO:0000266"/>
    <property type="project" value="RGD"/>
</dbReference>
<dbReference type="GO" id="GO:0046661">
    <property type="term" value="P:male sex differentiation"/>
    <property type="evidence" value="ECO:0000266"/>
    <property type="project" value="RGD"/>
</dbReference>
<dbReference type="GO" id="GO:0042487">
    <property type="term" value="P:regulation of odontogenesis of dentin-containing tooth"/>
    <property type="evidence" value="ECO:0000266"/>
    <property type="project" value="RGD"/>
</dbReference>
<dbReference type="GO" id="GO:0006357">
    <property type="term" value="P:regulation of transcription by RNA polymerase II"/>
    <property type="evidence" value="ECO:0000318"/>
    <property type="project" value="GO_Central"/>
</dbReference>
<dbReference type="GO" id="GO:0019226">
    <property type="term" value="P:transmission of nerve impulse"/>
    <property type="evidence" value="ECO:0000266"/>
    <property type="project" value="RGD"/>
</dbReference>
<dbReference type="GO" id="GO:0021521">
    <property type="term" value="P:ventral spinal cord interneuron specification"/>
    <property type="evidence" value="ECO:0000266"/>
    <property type="project" value="RGD"/>
</dbReference>
<dbReference type="CDD" id="cd14419">
    <property type="entry name" value="CUE_DMA_DMRTA3"/>
    <property type="match status" value="1"/>
</dbReference>
<dbReference type="FunFam" id="4.10.1040.10:FF:000001">
    <property type="entry name" value="doublesex- and mab-3-related transcription factor 1"/>
    <property type="match status" value="1"/>
</dbReference>
<dbReference type="Gene3D" id="4.10.1040.10">
    <property type="entry name" value="DM DNA-binding domain"/>
    <property type="match status" value="1"/>
</dbReference>
<dbReference type="InterPro" id="IPR001275">
    <property type="entry name" value="DM_DNA-bd"/>
</dbReference>
<dbReference type="InterPro" id="IPR036407">
    <property type="entry name" value="DM_DNA-bd_sf"/>
</dbReference>
<dbReference type="InterPro" id="IPR005173">
    <property type="entry name" value="DMA"/>
</dbReference>
<dbReference type="InterPro" id="IPR026607">
    <property type="entry name" value="DMRT"/>
</dbReference>
<dbReference type="InterPro" id="IPR009060">
    <property type="entry name" value="UBA-like_sf"/>
</dbReference>
<dbReference type="PANTHER" id="PTHR12322">
    <property type="entry name" value="DOUBLESEX AND MAB-3 RELATED TRANSCRIPTION FACTOR DMRT"/>
    <property type="match status" value="1"/>
</dbReference>
<dbReference type="PANTHER" id="PTHR12322:SF120">
    <property type="entry name" value="DOUBLESEX- AND MAB-3-RELATED TRANSCRIPTION FACTOR 3"/>
    <property type="match status" value="1"/>
</dbReference>
<dbReference type="Pfam" id="PF00751">
    <property type="entry name" value="DM"/>
    <property type="match status" value="1"/>
</dbReference>
<dbReference type="Pfam" id="PF03474">
    <property type="entry name" value="DMA"/>
    <property type="match status" value="1"/>
</dbReference>
<dbReference type="SMART" id="SM00301">
    <property type="entry name" value="DM"/>
    <property type="match status" value="1"/>
</dbReference>
<dbReference type="SUPFAM" id="SSF82927">
    <property type="entry name" value="Cysteine-rich DNA binding domain, (DM domain)"/>
    <property type="match status" value="1"/>
</dbReference>
<dbReference type="SUPFAM" id="SSF46934">
    <property type="entry name" value="UBA-like"/>
    <property type="match status" value="1"/>
</dbReference>
<dbReference type="PROSITE" id="PS40000">
    <property type="entry name" value="DM_1"/>
    <property type="match status" value="1"/>
</dbReference>
<dbReference type="PROSITE" id="PS50809">
    <property type="entry name" value="DM_2"/>
    <property type="match status" value="1"/>
</dbReference>
<gene>
    <name type="primary">Dmrt3</name>
</gene>
<feature type="chain" id="PRO_0000422703" description="Doublesex and mab-3 related transcription factor 3">
    <location>
        <begin position="1"/>
        <end position="476"/>
    </location>
</feature>
<feature type="domain" description="DMA" evidence="3">
    <location>
        <begin position="255"/>
        <end position="290"/>
    </location>
</feature>
<feature type="DNA-binding region" description="DM" evidence="4">
    <location>
        <begin position="29"/>
        <end position="76"/>
    </location>
</feature>
<feature type="region of interest" description="Disordered" evidence="5">
    <location>
        <begin position="89"/>
        <end position="130"/>
    </location>
</feature>
<feature type="region of interest" description="Disordered" evidence="5">
    <location>
        <begin position="147"/>
        <end position="195"/>
    </location>
</feature>
<feature type="region of interest" description="Disordered" evidence="5">
    <location>
        <begin position="418"/>
        <end position="476"/>
    </location>
</feature>
<feature type="compositionally biased region" description="Low complexity" evidence="5">
    <location>
        <begin position="102"/>
        <end position="121"/>
    </location>
</feature>
<feature type="compositionally biased region" description="Basic and acidic residues" evidence="5">
    <location>
        <begin position="176"/>
        <end position="185"/>
    </location>
</feature>
<feature type="compositionally biased region" description="Polar residues" evidence="5">
    <location>
        <begin position="418"/>
        <end position="432"/>
    </location>
</feature>
<comment type="function">
    <text evidence="1">Probable transcription factor that plays a role in configuring the spinal circuits controlling stride in vertebrates. Involved in neuronal specification within a specific subdivision of spinal cord neurons and in the development of a coordinated locomotor network controlling limb movements. May regulate transcription during sexual development (By similarity).</text>
</comment>
<comment type="subcellular location">
    <subcellularLocation>
        <location evidence="4">Nucleus</location>
    </subcellularLocation>
</comment>
<comment type="domain">
    <text evidence="2">DMA domain interacts with ubiquitin.</text>
</comment>
<comment type="miscellaneous">
    <text>DMRT3 is a marker for a subset of spinal cord neurons (dI6).</text>
</comment>
<comment type="similarity">
    <text evidence="6">Belongs to the DMRT family.</text>
</comment>
<evidence type="ECO:0000250" key="1"/>
<evidence type="ECO:0000250" key="2">
    <source>
        <dbReference type="UniProtKB" id="Q9NQL9"/>
    </source>
</evidence>
<evidence type="ECO:0000255" key="3"/>
<evidence type="ECO:0000255" key="4">
    <source>
        <dbReference type="PROSITE-ProRule" id="PRU00070"/>
    </source>
</evidence>
<evidence type="ECO:0000256" key="5">
    <source>
        <dbReference type="SAM" id="MobiDB-lite"/>
    </source>
</evidence>
<evidence type="ECO:0000305" key="6"/>
<organism>
    <name type="scientific">Rattus norvegicus</name>
    <name type="common">Rat</name>
    <dbReference type="NCBI Taxonomy" id="10116"/>
    <lineage>
        <taxon>Eukaryota</taxon>
        <taxon>Metazoa</taxon>
        <taxon>Chordata</taxon>
        <taxon>Craniata</taxon>
        <taxon>Vertebrata</taxon>
        <taxon>Euteleostomi</taxon>
        <taxon>Mammalia</taxon>
        <taxon>Eutheria</taxon>
        <taxon>Euarchontoglires</taxon>
        <taxon>Glires</taxon>
        <taxon>Rodentia</taxon>
        <taxon>Myomorpha</taxon>
        <taxon>Muroidea</taxon>
        <taxon>Muridae</taxon>
        <taxon>Murinae</taxon>
        <taxon>Rattus</taxon>
    </lineage>
</organism>
<sequence length="476" mass="51444">MNGYGSPYLYMGGPVSQPPRAPLQRTPKCARCRNHGVLSWLKGHKRYCRFKDCTCEKCILIIERQRVMAAQVALRRQQANESLESLIPDSLRALPGPPPPGDAAATAATASQSSPASQASQPPAPPRPATELAAAAALRWVAEPQPGTLPAQIAKPDLTEDRLGDSSSADNAAESFSDKDTDQRSSPDVVKSKNCFTPESPEIVSVDEGGYAVQKNGGNPESCPDSPKYHAEQSHLLIEGPSGTVSLPFSLKANRPPLEVLKKIFPNQKPTVLELILKGCGGDLVSAVEVLLSSRSSAAGAERTAEESLVLPSSGHIFEHTLGSYPISSSKWSVGSAFRVPDTLRFSADSSNVVPNPLAVPLQHPFPQPPRYPLMLRNTLARNQSSPFLPNDVTLWNTMTLQQQYQLRSQYVSPFPSNSTSVFRSSPVLSSRTTEDPRISIPDDGCPIVAKQSIYTEDDYDERSDSSDSRILNTSS</sequence>
<keyword id="KW-0217">Developmental protein</keyword>
<keyword id="KW-0221">Differentiation</keyword>
<keyword id="KW-0238">DNA-binding</keyword>
<keyword id="KW-0479">Metal-binding</keyword>
<keyword id="KW-0539">Nucleus</keyword>
<keyword id="KW-1185">Reference proteome</keyword>
<keyword id="KW-0726">Sexual differentiation</keyword>
<keyword id="KW-0804">Transcription</keyword>
<keyword id="KW-0805">Transcription regulation</keyword>
<keyword id="KW-0862">Zinc</keyword>